<keyword id="KW-0194">Cyanelle</keyword>
<keyword id="KW-0934">Plastid</keyword>
<keyword id="KW-0687">Ribonucleoprotein</keyword>
<keyword id="KW-0689">Ribosomal protein</keyword>
<keyword id="KW-0694">RNA-binding</keyword>
<keyword id="KW-0699">rRNA-binding</keyword>
<comment type="function">
    <text evidence="1">Binds 23S rRNA.</text>
</comment>
<comment type="subunit">
    <text evidence="1">Part of the 50S ribosomal subunit.</text>
</comment>
<comment type="subcellular location">
    <subcellularLocation>
        <location>Plastid</location>
        <location>Cyanelle</location>
    </subcellularLocation>
</comment>
<comment type="similarity">
    <text evidence="2">Belongs to the universal ribosomal protein uL6 family.</text>
</comment>
<gene>
    <name type="primary">rpl6</name>
</gene>
<geneLocation type="cyanelle"/>
<dbReference type="EMBL" id="M30487">
    <property type="protein sequence ID" value="AAA63627.1"/>
    <property type="molecule type" value="Genomic_DNA"/>
</dbReference>
<dbReference type="EMBL" id="U30821">
    <property type="protein sequence ID" value="AAA81221.1"/>
    <property type="molecule type" value="Genomic_DNA"/>
</dbReference>
<dbReference type="EMBL" id="X16548">
    <property type="protein sequence ID" value="CAA34550.1"/>
    <property type="molecule type" value="Genomic_DNA"/>
</dbReference>
<dbReference type="PIR" id="S12218">
    <property type="entry name" value="R5KT6"/>
</dbReference>
<dbReference type="RefSeq" id="NP_043190.1">
    <property type="nucleotide sequence ID" value="NC_001675.1"/>
</dbReference>
<dbReference type="SMR" id="P14808"/>
<dbReference type="GeneID" id="801591"/>
<dbReference type="GO" id="GO:0009842">
    <property type="term" value="C:cyanelle"/>
    <property type="evidence" value="ECO:0007669"/>
    <property type="project" value="UniProtKB-SubCell"/>
</dbReference>
<dbReference type="GO" id="GO:0022625">
    <property type="term" value="C:cytosolic large ribosomal subunit"/>
    <property type="evidence" value="ECO:0007669"/>
    <property type="project" value="TreeGrafter"/>
</dbReference>
<dbReference type="GO" id="GO:0019843">
    <property type="term" value="F:rRNA binding"/>
    <property type="evidence" value="ECO:0007669"/>
    <property type="project" value="UniProtKB-KW"/>
</dbReference>
<dbReference type="GO" id="GO:0003735">
    <property type="term" value="F:structural constituent of ribosome"/>
    <property type="evidence" value="ECO:0007669"/>
    <property type="project" value="InterPro"/>
</dbReference>
<dbReference type="GO" id="GO:0002181">
    <property type="term" value="P:cytoplasmic translation"/>
    <property type="evidence" value="ECO:0007669"/>
    <property type="project" value="TreeGrafter"/>
</dbReference>
<dbReference type="FunFam" id="3.90.930.12:FF:000001">
    <property type="entry name" value="50S ribosomal protein L6"/>
    <property type="match status" value="1"/>
</dbReference>
<dbReference type="FunFam" id="3.90.930.12:FF:000002">
    <property type="entry name" value="50S ribosomal protein L6"/>
    <property type="match status" value="1"/>
</dbReference>
<dbReference type="Gene3D" id="3.90.930.12">
    <property type="entry name" value="Ribosomal protein L6, alpha-beta domain"/>
    <property type="match status" value="2"/>
</dbReference>
<dbReference type="HAMAP" id="MF_01365_B">
    <property type="entry name" value="Ribosomal_uL6_B"/>
    <property type="match status" value="1"/>
</dbReference>
<dbReference type="InterPro" id="IPR000702">
    <property type="entry name" value="Ribosomal_uL6-like"/>
</dbReference>
<dbReference type="InterPro" id="IPR036789">
    <property type="entry name" value="Ribosomal_uL6-like_a/b-dom_sf"/>
</dbReference>
<dbReference type="InterPro" id="IPR020040">
    <property type="entry name" value="Ribosomal_uL6_a/b-dom"/>
</dbReference>
<dbReference type="InterPro" id="IPR019906">
    <property type="entry name" value="Ribosomal_uL6_bac-type"/>
</dbReference>
<dbReference type="InterPro" id="IPR002358">
    <property type="entry name" value="Ribosomal_uL6_CS"/>
</dbReference>
<dbReference type="NCBIfam" id="TIGR03654">
    <property type="entry name" value="L6_bact"/>
    <property type="match status" value="1"/>
</dbReference>
<dbReference type="PANTHER" id="PTHR11655">
    <property type="entry name" value="60S/50S RIBOSOMAL PROTEIN L6/L9"/>
    <property type="match status" value="1"/>
</dbReference>
<dbReference type="PANTHER" id="PTHR11655:SF14">
    <property type="entry name" value="LARGE RIBOSOMAL SUBUNIT PROTEIN UL6M"/>
    <property type="match status" value="1"/>
</dbReference>
<dbReference type="Pfam" id="PF00347">
    <property type="entry name" value="Ribosomal_L6"/>
    <property type="match status" value="2"/>
</dbReference>
<dbReference type="PIRSF" id="PIRSF002162">
    <property type="entry name" value="Ribosomal_L6"/>
    <property type="match status" value="1"/>
</dbReference>
<dbReference type="PRINTS" id="PR00059">
    <property type="entry name" value="RIBOSOMALL6"/>
</dbReference>
<dbReference type="SUPFAM" id="SSF56053">
    <property type="entry name" value="Ribosomal protein L6"/>
    <property type="match status" value="2"/>
</dbReference>
<dbReference type="PROSITE" id="PS00525">
    <property type="entry name" value="RIBOSOMAL_L6_1"/>
    <property type="match status" value="1"/>
</dbReference>
<sequence>MSRIGKRLINIPSQVTVSIKDQVFSVKGPKGELSKQIPYGIQVVQQNDHLVVERVAESLLARKLHGLCRTLVSNLVQGVFQGFERRLEIQGVGYRAQMDGKKLVLNIGFSHPVVIEPPTEIQLQVENNTNIIIKGIDKELVGKLAAEIRAVRPPEPYKGKGIRYLGENVKRKVGKAGKK</sequence>
<accession>P14808</accession>
<protein>
    <recommendedName>
        <fullName evidence="2">Large ribosomal subunit protein uL6c</fullName>
    </recommendedName>
    <alternativeName>
        <fullName>50S ribosomal protein L6, cyanelle</fullName>
    </alternativeName>
</protein>
<evidence type="ECO:0000250" key="1"/>
<evidence type="ECO:0000305" key="2"/>
<reference key="1">
    <citation type="journal article" date="1990" name="Mol. Gen. Genet.">
        <title>The cyanelle S10 spc ribosomal protein gene operon from Cyanophora paradoxa.</title>
        <authorList>
            <person name="Michalowski C.B."/>
            <person name="Pfanzagl B."/>
            <person name="Loeffelhardt W."/>
            <person name="Bohnert H.J."/>
        </authorList>
    </citation>
    <scope>NUCLEOTIDE SEQUENCE [GENOMIC DNA]</scope>
    <source>
        <strain>UTEX LB 555 / Pringsheim</strain>
    </source>
</reference>
<reference key="2">
    <citation type="journal article" date="1995" name="Plant Mol. Biol. Rep.">
        <title>Nucleotide sequence of the cyanelle DNA from Cyanophora paradoxa.</title>
        <authorList>
            <person name="Stirewalt V.L."/>
            <person name="Michalowski C.B."/>
            <person name="Loeffelhardt W."/>
            <person name="Bohnert H.J."/>
            <person name="Bryant D.A."/>
        </authorList>
    </citation>
    <scope>NUCLEOTIDE SEQUENCE [LARGE SCALE GENOMIC DNA]</scope>
    <source>
        <strain>UTEX LB 555 / Pringsheim</strain>
    </source>
</reference>
<reference key="3">
    <citation type="book" date="1997" name="Eukaryotism and symbiosis">
        <title>The complete sequence of the cyanelle genome of Cyanophora paradoxa: the genetic complexity of a primitive plastid.</title>
        <editorList>
            <person name="Schenk H.E.A."/>
            <person name="Herrmann R."/>
            <person name="Jeon K.W."/>
            <person name="Mueller N.E."/>
            <person name="Schwemmler W."/>
        </editorList>
        <authorList>
            <person name="Loeffelhardt W."/>
            <person name="Stirewalt V.L."/>
            <person name="Michalowski C.B."/>
            <person name="Annarella M."/>
            <person name="Farley J.Y."/>
            <person name="Schluchter W.M."/>
            <person name="Chung S."/>
            <person name="Newmann-Spallart C."/>
            <person name="Steiner J.M."/>
            <person name="Jakowitsch J."/>
            <person name="Bohnert H.J."/>
            <person name="Bryant D.A."/>
        </authorList>
    </citation>
    <scope>NUCLEOTIDE SEQUENCE [LARGE SCALE GENOMIC DNA]</scope>
    <source>
        <strain>UTEX LB 555 / Pringsheim</strain>
    </source>
</reference>
<reference key="4">
    <citation type="journal article" date="1990" name="FEBS Lett.">
        <title>The cyanelle genome of Cyanophora paradoxa encodes ribosomal proteins not encoded by the chloroplasts genomes of higher plants.</title>
        <authorList>
            <person name="Bryant D.A."/>
            <person name="Stirewalt V.L."/>
        </authorList>
    </citation>
    <scope>NUCLEOTIDE SEQUENCE [GENOMIC DNA] OF 1-41</scope>
    <source>
        <strain>UTEX LB 555 / Pringsheim</strain>
    </source>
</reference>
<proteinExistence type="inferred from homology"/>
<organism>
    <name type="scientific">Cyanophora paradoxa</name>
    <dbReference type="NCBI Taxonomy" id="2762"/>
    <lineage>
        <taxon>Eukaryota</taxon>
        <taxon>Glaucocystophyceae</taxon>
        <taxon>Cyanophoraceae</taxon>
        <taxon>Cyanophora</taxon>
    </lineage>
</organism>
<feature type="chain" id="PRO_0000131077" description="Large ribosomal subunit protein uL6c">
    <location>
        <begin position="1"/>
        <end position="179"/>
    </location>
</feature>
<name>RK6_CYAPA</name>